<organism>
    <name type="scientific">Haemophilus influenzae (strain ATCC 51907 / DSM 11121 / KW20 / Rd)</name>
    <dbReference type="NCBI Taxonomy" id="71421"/>
    <lineage>
        <taxon>Bacteria</taxon>
        <taxon>Pseudomonadati</taxon>
        <taxon>Pseudomonadota</taxon>
        <taxon>Gammaproteobacteria</taxon>
        <taxon>Pasteurellales</taxon>
        <taxon>Pasteurellaceae</taxon>
        <taxon>Haemophilus</taxon>
    </lineage>
</organism>
<sequence>MSFKELITQDQRLVVLRVLSEAGYDANESIINDGLDLYGHDISRDLVRTHLSWLEEQGLLTIERLKDGYMVASITQRWLRCSTRSCGSGRRKTPPPENLNTV</sequence>
<proteinExistence type="predicted"/>
<gene>
    <name type="ordered locus">HI_1498.1</name>
</gene>
<accession>O86242</accession>
<feature type="chain" id="PRO_0000078079" description="Uncharacterized protein HI_1498.1">
    <location>
        <begin position="1"/>
        <end position="102"/>
    </location>
</feature>
<name>Y149A_HAEIN</name>
<reference key="1">
    <citation type="journal article" date="1995" name="Science">
        <title>Whole-genome random sequencing and assembly of Haemophilus influenzae Rd.</title>
        <authorList>
            <person name="Fleischmann R.D."/>
            <person name="Adams M.D."/>
            <person name="White O."/>
            <person name="Clayton R.A."/>
            <person name="Kirkness E.F."/>
            <person name="Kerlavage A.R."/>
            <person name="Bult C.J."/>
            <person name="Tomb J.-F."/>
            <person name="Dougherty B.A."/>
            <person name="Merrick J.M."/>
            <person name="McKenney K."/>
            <person name="Sutton G.G."/>
            <person name="FitzHugh W."/>
            <person name="Fields C.A."/>
            <person name="Gocayne J.D."/>
            <person name="Scott J.D."/>
            <person name="Shirley R."/>
            <person name="Liu L.-I."/>
            <person name="Glodek A."/>
            <person name="Kelley J.M."/>
            <person name="Weidman J.F."/>
            <person name="Phillips C.A."/>
            <person name="Spriggs T."/>
            <person name="Hedblom E."/>
            <person name="Cotton M.D."/>
            <person name="Utterback T.R."/>
            <person name="Hanna M.C."/>
            <person name="Nguyen D.T."/>
            <person name="Saudek D.M."/>
            <person name="Brandon R.C."/>
            <person name="Fine L.D."/>
            <person name="Fritchman J.L."/>
            <person name="Fuhrmann J.L."/>
            <person name="Geoghagen N.S.M."/>
            <person name="Gnehm C.L."/>
            <person name="McDonald L.A."/>
            <person name="Small K.V."/>
            <person name="Fraser C.M."/>
            <person name="Smith H.O."/>
            <person name="Venter J.C."/>
        </authorList>
    </citation>
    <scope>NUCLEOTIDE SEQUENCE [LARGE SCALE GENOMIC DNA]</scope>
    <source>
        <strain>ATCC 51907 / DSM 11121 / KW20 / Rd</strain>
    </source>
</reference>
<reference key="2">
    <citation type="submission" date="1998-05" db="EMBL/GenBank/DDBJ databases">
        <authorList>
            <person name="White O."/>
            <person name="Clayton R.A."/>
            <person name="Kerlavage A.R."/>
            <person name="Fleischmann R.D."/>
            <person name="Peterson J."/>
            <person name="Hickey E."/>
            <person name="Dodson R."/>
            <person name="Gwinn M."/>
        </authorList>
    </citation>
    <scope>IDENTIFICATION</scope>
</reference>
<dbReference type="EMBL" id="L42023">
    <property type="protein sequence ID" value="AAC23152.1"/>
    <property type="molecule type" value="Genomic_DNA"/>
</dbReference>
<dbReference type="RefSeq" id="NP_439648.1">
    <property type="nucleotide sequence ID" value="NC_000907.1"/>
</dbReference>
<dbReference type="SMR" id="O86242"/>
<dbReference type="STRING" id="71421.HI_1498.1"/>
<dbReference type="EnsemblBacteria" id="AAC23152">
    <property type="protein sequence ID" value="AAC23152"/>
    <property type="gene ID" value="HI_1498.1"/>
</dbReference>
<dbReference type="KEGG" id="hin:HI_1498.1"/>
<dbReference type="PATRIC" id="fig|71421.8.peg.1568"/>
<dbReference type="eggNOG" id="COG0640">
    <property type="taxonomic scope" value="Bacteria"/>
</dbReference>
<dbReference type="HOGENOM" id="CLU_176097_1_0_6"/>
<dbReference type="OrthoDB" id="7855192at2"/>
<dbReference type="PhylomeDB" id="O86242"/>
<dbReference type="BioCyc" id="HINF71421:G1GJ1-1521-MONOMER"/>
<dbReference type="Proteomes" id="UP000000579">
    <property type="component" value="Chromosome"/>
</dbReference>
<dbReference type="InterPro" id="IPR013668">
    <property type="entry name" value="RNase_R_HTH_12"/>
</dbReference>
<dbReference type="InterPro" id="IPR036390">
    <property type="entry name" value="WH_DNA-bd_sf"/>
</dbReference>
<dbReference type="Pfam" id="PF08461">
    <property type="entry name" value="HTH_12"/>
    <property type="match status" value="1"/>
</dbReference>
<dbReference type="SUPFAM" id="SSF46785">
    <property type="entry name" value="Winged helix' DNA-binding domain"/>
    <property type="match status" value="1"/>
</dbReference>
<keyword id="KW-1185">Reference proteome</keyword>
<protein>
    <recommendedName>
        <fullName>Uncharacterized protein HI_1498.1</fullName>
    </recommendedName>
</protein>